<organism>
    <name type="scientific">Teredinibacter turnerae (strain ATCC 39867 / T7901)</name>
    <dbReference type="NCBI Taxonomy" id="377629"/>
    <lineage>
        <taxon>Bacteria</taxon>
        <taxon>Pseudomonadati</taxon>
        <taxon>Pseudomonadota</taxon>
        <taxon>Gammaproteobacteria</taxon>
        <taxon>Cellvibrionales</taxon>
        <taxon>Cellvibrionaceae</taxon>
        <taxon>Teredinibacter</taxon>
    </lineage>
</organism>
<protein>
    <recommendedName>
        <fullName evidence="1">Bifunctional protein FolD</fullName>
    </recommendedName>
    <domain>
        <recommendedName>
            <fullName evidence="1">Methylenetetrahydrofolate dehydrogenase</fullName>
            <ecNumber evidence="1">1.5.1.5</ecNumber>
        </recommendedName>
    </domain>
    <domain>
        <recommendedName>
            <fullName evidence="1">Methenyltetrahydrofolate cyclohydrolase</fullName>
            <ecNumber evidence="1">3.5.4.9</ecNumber>
        </recommendedName>
    </domain>
</protein>
<name>FOLD_TERTT</name>
<comment type="function">
    <text evidence="1">Catalyzes the oxidation of 5,10-methylenetetrahydrofolate to 5,10-methenyltetrahydrofolate and then the hydrolysis of 5,10-methenyltetrahydrofolate to 10-formyltetrahydrofolate.</text>
</comment>
<comment type="catalytic activity">
    <reaction evidence="1">
        <text>(6R)-5,10-methylene-5,6,7,8-tetrahydrofolate + NADP(+) = (6R)-5,10-methenyltetrahydrofolate + NADPH</text>
        <dbReference type="Rhea" id="RHEA:22812"/>
        <dbReference type="ChEBI" id="CHEBI:15636"/>
        <dbReference type="ChEBI" id="CHEBI:57455"/>
        <dbReference type="ChEBI" id="CHEBI:57783"/>
        <dbReference type="ChEBI" id="CHEBI:58349"/>
        <dbReference type="EC" id="1.5.1.5"/>
    </reaction>
</comment>
<comment type="catalytic activity">
    <reaction evidence="1">
        <text>(6R)-5,10-methenyltetrahydrofolate + H2O = (6R)-10-formyltetrahydrofolate + H(+)</text>
        <dbReference type="Rhea" id="RHEA:23700"/>
        <dbReference type="ChEBI" id="CHEBI:15377"/>
        <dbReference type="ChEBI" id="CHEBI:15378"/>
        <dbReference type="ChEBI" id="CHEBI:57455"/>
        <dbReference type="ChEBI" id="CHEBI:195366"/>
        <dbReference type="EC" id="3.5.4.9"/>
    </reaction>
</comment>
<comment type="pathway">
    <text evidence="1">One-carbon metabolism; tetrahydrofolate interconversion.</text>
</comment>
<comment type="subunit">
    <text evidence="1">Homodimer.</text>
</comment>
<comment type="similarity">
    <text evidence="1">Belongs to the tetrahydrofolate dehydrogenase/cyclohydrolase family.</text>
</comment>
<reference key="1">
    <citation type="journal article" date="2009" name="PLoS ONE">
        <title>The complete genome of Teredinibacter turnerae T7901: an intracellular endosymbiont of marine wood-boring bivalves (shipworms).</title>
        <authorList>
            <person name="Yang J.C."/>
            <person name="Madupu R."/>
            <person name="Durkin A.S."/>
            <person name="Ekborg N.A."/>
            <person name="Pedamallu C.S."/>
            <person name="Hostetler J.B."/>
            <person name="Radune D."/>
            <person name="Toms B.S."/>
            <person name="Henrissat B."/>
            <person name="Coutinho P.M."/>
            <person name="Schwarz S."/>
            <person name="Field L."/>
            <person name="Trindade-Silva A.E."/>
            <person name="Soares C.A.G."/>
            <person name="Elshahawi S."/>
            <person name="Hanora A."/>
            <person name="Schmidt E.W."/>
            <person name="Haygood M.G."/>
            <person name="Posfai J."/>
            <person name="Benner J."/>
            <person name="Madinger C."/>
            <person name="Nove J."/>
            <person name="Anton B."/>
            <person name="Chaudhary K."/>
            <person name="Foster J."/>
            <person name="Holman A."/>
            <person name="Kumar S."/>
            <person name="Lessard P.A."/>
            <person name="Luyten Y.A."/>
            <person name="Slatko B."/>
            <person name="Wood N."/>
            <person name="Wu B."/>
            <person name="Teplitski M."/>
            <person name="Mougous J.D."/>
            <person name="Ward N."/>
            <person name="Eisen J.A."/>
            <person name="Badger J.H."/>
            <person name="Distel D.L."/>
        </authorList>
    </citation>
    <scope>NUCLEOTIDE SEQUENCE [LARGE SCALE GENOMIC DNA]</scope>
    <source>
        <strain>ATCC 39867 / T7901</strain>
    </source>
</reference>
<dbReference type="EC" id="1.5.1.5" evidence="1"/>
<dbReference type="EC" id="3.5.4.9" evidence="1"/>
<dbReference type="EMBL" id="CP001614">
    <property type="protein sequence ID" value="ACR14358.1"/>
    <property type="molecule type" value="Genomic_DNA"/>
</dbReference>
<dbReference type="RefSeq" id="WP_015820473.1">
    <property type="nucleotide sequence ID" value="NC_012997.1"/>
</dbReference>
<dbReference type="SMR" id="C5BI30"/>
<dbReference type="STRING" id="377629.TERTU_1926"/>
<dbReference type="KEGG" id="ttu:TERTU_1926"/>
<dbReference type="eggNOG" id="COG0190">
    <property type="taxonomic scope" value="Bacteria"/>
</dbReference>
<dbReference type="HOGENOM" id="CLU_034045_2_1_6"/>
<dbReference type="OrthoDB" id="9803580at2"/>
<dbReference type="UniPathway" id="UPA00193"/>
<dbReference type="Proteomes" id="UP000009080">
    <property type="component" value="Chromosome"/>
</dbReference>
<dbReference type="GO" id="GO:0005829">
    <property type="term" value="C:cytosol"/>
    <property type="evidence" value="ECO:0007669"/>
    <property type="project" value="TreeGrafter"/>
</dbReference>
<dbReference type="GO" id="GO:0004477">
    <property type="term" value="F:methenyltetrahydrofolate cyclohydrolase activity"/>
    <property type="evidence" value="ECO:0007669"/>
    <property type="project" value="UniProtKB-UniRule"/>
</dbReference>
<dbReference type="GO" id="GO:0004488">
    <property type="term" value="F:methylenetetrahydrofolate dehydrogenase (NADP+) activity"/>
    <property type="evidence" value="ECO:0007669"/>
    <property type="project" value="UniProtKB-UniRule"/>
</dbReference>
<dbReference type="GO" id="GO:0000105">
    <property type="term" value="P:L-histidine biosynthetic process"/>
    <property type="evidence" value="ECO:0007669"/>
    <property type="project" value="UniProtKB-KW"/>
</dbReference>
<dbReference type="GO" id="GO:0009086">
    <property type="term" value="P:methionine biosynthetic process"/>
    <property type="evidence" value="ECO:0007669"/>
    <property type="project" value="UniProtKB-KW"/>
</dbReference>
<dbReference type="GO" id="GO:0006164">
    <property type="term" value="P:purine nucleotide biosynthetic process"/>
    <property type="evidence" value="ECO:0007669"/>
    <property type="project" value="UniProtKB-KW"/>
</dbReference>
<dbReference type="GO" id="GO:0035999">
    <property type="term" value="P:tetrahydrofolate interconversion"/>
    <property type="evidence" value="ECO:0007669"/>
    <property type="project" value="UniProtKB-UniRule"/>
</dbReference>
<dbReference type="CDD" id="cd01080">
    <property type="entry name" value="NAD_bind_m-THF_DH_Cyclohyd"/>
    <property type="match status" value="1"/>
</dbReference>
<dbReference type="FunFam" id="3.40.50.720:FF:000094">
    <property type="entry name" value="Bifunctional protein FolD"/>
    <property type="match status" value="1"/>
</dbReference>
<dbReference type="FunFam" id="3.40.50.10860:FF:000005">
    <property type="entry name" value="C-1-tetrahydrofolate synthase, cytoplasmic, putative"/>
    <property type="match status" value="1"/>
</dbReference>
<dbReference type="Gene3D" id="3.40.50.10860">
    <property type="entry name" value="Leucine Dehydrogenase, chain A, domain 1"/>
    <property type="match status" value="1"/>
</dbReference>
<dbReference type="Gene3D" id="3.40.50.720">
    <property type="entry name" value="NAD(P)-binding Rossmann-like Domain"/>
    <property type="match status" value="1"/>
</dbReference>
<dbReference type="HAMAP" id="MF_01576">
    <property type="entry name" value="THF_DHG_CYH"/>
    <property type="match status" value="1"/>
</dbReference>
<dbReference type="InterPro" id="IPR046346">
    <property type="entry name" value="Aminoacid_DH-like_N_sf"/>
</dbReference>
<dbReference type="InterPro" id="IPR036291">
    <property type="entry name" value="NAD(P)-bd_dom_sf"/>
</dbReference>
<dbReference type="InterPro" id="IPR000672">
    <property type="entry name" value="THF_DH/CycHdrlase"/>
</dbReference>
<dbReference type="InterPro" id="IPR020630">
    <property type="entry name" value="THF_DH/CycHdrlase_cat_dom"/>
</dbReference>
<dbReference type="InterPro" id="IPR020867">
    <property type="entry name" value="THF_DH/CycHdrlase_CS"/>
</dbReference>
<dbReference type="InterPro" id="IPR020631">
    <property type="entry name" value="THF_DH/CycHdrlase_NAD-bd_dom"/>
</dbReference>
<dbReference type="NCBIfam" id="NF010788">
    <property type="entry name" value="PRK14192.1"/>
    <property type="match status" value="1"/>
</dbReference>
<dbReference type="PANTHER" id="PTHR48099:SF5">
    <property type="entry name" value="C-1-TETRAHYDROFOLATE SYNTHASE, CYTOPLASMIC"/>
    <property type="match status" value="1"/>
</dbReference>
<dbReference type="PANTHER" id="PTHR48099">
    <property type="entry name" value="C-1-TETRAHYDROFOLATE SYNTHASE, CYTOPLASMIC-RELATED"/>
    <property type="match status" value="1"/>
</dbReference>
<dbReference type="Pfam" id="PF00763">
    <property type="entry name" value="THF_DHG_CYH"/>
    <property type="match status" value="1"/>
</dbReference>
<dbReference type="Pfam" id="PF02882">
    <property type="entry name" value="THF_DHG_CYH_C"/>
    <property type="match status" value="1"/>
</dbReference>
<dbReference type="PRINTS" id="PR00085">
    <property type="entry name" value="THFDHDRGNASE"/>
</dbReference>
<dbReference type="SUPFAM" id="SSF53223">
    <property type="entry name" value="Aminoacid dehydrogenase-like, N-terminal domain"/>
    <property type="match status" value="1"/>
</dbReference>
<dbReference type="SUPFAM" id="SSF51735">
    <property type="entry name" value="NAD(P)-binding Rossmann-fold domains"/>
    <property type="match status" value="1"/>
</dbReference>
<dbReference type="PROSITE" id="PS00767">
    <property type="entry name" value="THF_DHG_CYH_2"/>
    <property type="match status" value="1"/>
</dbReference>
<feature type="chain" id="PRO_1000215608" description="Bifunctional protein FolD">
    <location>
        <begin position="1"/>
        <end position="280"/>
    </location>
</feature>
<feature type="binding site" evidence="1">
    <location>
        <begin position="166"/>
        <end position="168"/>
    </location>
    <ligand>
        <name>NADP(+)</name>
        <dbReference type="ChEBI" id="CHEBI:58349"/>
    </ligand>
</feature>
<feature type="binding site" evidence="1">
    <location>
        <position position="191"/>
    </location>
    <ligand>
        <name>NADP(+)</name>
        <dbReference type="ChEBI" id="CHEBI:58349"/>
    </ligand>
</feature>
<gene>
    <name evidence="1" type="primary">folD</name>
    <name type="ordered locus">TERTU_1926</name>
</gene>
<accession>C5BI30</accession>
<proteinExistence type="inferred from homology"/>
<sequence length="280" mass="29347">MSALILDGKALAQKTEAELSERVAALKSKTGRTPILATILVGGDPASATYVRMKGNACTRIGMDSMKVELPETTTTDELLAKIAELNNNPDVHGILLQHPVPSQIDERACFDAIDLSKDVDGVTCLGFGRMAMGEEAYGCATPKGIMRLLEAYEIPLEGKHAVVVGRSPILGKPMALMLLNANATVTICHSRTKDLQSHIATADIVVGAVGIPEFIKADWIKPGAVVVDAGYHPGGVGDIELGPLADKASALTPVPGGVGPMTINTLIYQSVDSGEKKLA</sequence>
<evidence type="ECO:0000255" key="1">
    <source>
        <dbReference type="HAMAP-Rule" id="MF_01576"/>
    </source>
</evidence>
<keyword id="KW-0028">Amino-acid biosynthesis</keyword>
<keyword id="KW-0368">Histidine biosynthesis</keyword>
<keyword id="KW-0378">Hydrolase</keyword>
<keyword id="KW-0486">Methionine biosynthesis</keyword>
<keyword id="KW-0511">Multifunctional enzyme</keyword>
<keyword id="KW-0521">NADP</keyword>
<keyword id="KW-0554">One-carbon metabolism</keyword>
<keyword id="KW-0560">Oxidoreductase</keyword>
<keyword id="KW-0658">Purine biosynthesis</keyword>
<keyword id="KW-1185">Reference proteome</keyword>